<evidence type="ECO:0000250" key="1">
    <source>
        <dbReference type="UniProtKB" id="O15213"/>
    </source>
</evidence>
<evidence type="ECO:0000256" key="2">
    <source>
        <dbReference type="SAM" id="MobiDB-lite"/>
    </source>
</evidence>
<protein>
    <recommendedName>
        <fullName>WD repeat-containing protein 46</fullName>
    </recommendedName>
    <alternativeName>
        <fullName>WD repeat-containing protein BING4</fullName>
    </alternativeName>
</protein>
<sequence>METAPKPGRGVPPKRDKPQAKRKKPRRYWEEETTPAAVATSPGPPRKKARTGESRPPRSKSAHIAQKSRFSKKPPISKTAPDWKKPQRTLSGAQDPFPGPVPAPLEEARKFCRIDKSKTLPHSKPKTQSKLEKAEAQEEEASVRAARAELLLAEEPGFLVGEDGEDTAKILQTDIVEAVDIASAAKHFDLNLRQFGPYRLNYSRTGRHLALGGRRGHVAALDWVTKKLMCEINVMEAVRDIHFLHSEALLAVAQNRWLYIYDNQGIELHCIRRCDRVTRLEFLPFHFLLATTSETGFLTYLDVSVGKIVTALNVRAGRLSVMAQNPYNAVIHLGHSNGTVSLWSPAVKEPLAKILCHRGGVRAVAVDSTGTYMATSGLDHQLKIFDLRGTFQPLSSRTLPQGAGHLAFSQRGLLVAGMGDVVNIWAGQGKASPPSLEQPYLTHRLSGHVHGLQFCPFEDVLGVGHSGGFTSMLVPGAAEPNFDGLENNPYRSRKQRQEWEVKALLEKVPAELICLNPRALAEVDVVTLEQQKKERIERLGYDPDAKAAFQPKAKQKGRSSTASLVKRKKKVMDQEHRDKVRQSLEQQQQKKKQDMAMPPGARPSALDRFVRRAREGGLQVDP</sequence>
<comment type="function">
    <text evidence="1">Scaffold component of the nucleolar structure. Required for localization of DDX21 and NCL to the granular compartment of the nucleolus. Part of the small subunit (SSU) processome, first precursor of the small eukaryotic ribosomal subunit. During the assembly of the SSU processome in the nucleolus, many ribosome biogenesis factors, an RNA chaperone and ribosomal proteins associate with the nascent pre-rRNA and work in concert to generate RNA folding, modifications, rearrangements and cleavage as well as targeted degradation of pre-ribosomal RNA by the RNA exosome.</text>
</comment>
<comment type="subunit">
    <text evidence="1">Part of the small subunit (SSU) processome, composed of more than 70 proteins and the RNA chaperone small nucleolar RNA (snoRNA) U3. Interacts with DDX21, NCL, NOP2 and EBNA1BP2.</text>
</comment>
<comment type="subcellular location">
    <subcellularLocation>
        <location evidence="1">Nucleus</location>
        <location evidence="1">Nucleolus</location>
    </subcellularLocation>
</comment>
<reference key="1">
    <citation type="submission" date="1998-12" db="EMBL/GenBank/DDBJ databases">
        <title>Sequence of the mouse major histocompatibility complex class II region.</title>
        <authorList>
            <person name="Rowen L."/>
            <person name="Qin S."/>
            <person name="Madan A."/>
            <person name="Loretz C."/>
            <person name="Hall J."/>
            <person name="James R."/>
            <person name="Dors M."/>
            <person name="Shaffer T."/>
            <person name="Abbasi N."/>
            <person name="Ratcliffe A."/>
            <person name="Dickhoff R."/>
            <person name="Lasky S."/>
            <person name="Hood L."/>
        </authorList>
    </citation>
    <scope>NUCLEOTIDE SEQUENCE [LARGE SCALE GENOMIC DNA]</scope>
    <source>
        <strain>129/SvJ</strain>
    </source>
</reference>
<reference key="2">
    <citation type="journal article" date="2004" name="Genome Res.">
        <title>The status, quality, and expansion of the NIH full-length cDNA project: the Mammalian Gene Collection (MGC).</title>
        <authorList>
            <consortium name="The MGC Project Team"/>
        </authorList>
    </citation>
    <scope>NUCLEOTIDE SEQUENCE [LARGE SCALE MRNA]</scope>
    <source>
        <tissue>Olfactory epithelium</tissue>
    </source>
</reference>
<feature type="chain" id="PRO_0000051396" description="WD repeat-containing protein 46">
    <location>
        <begin position="1"/>
        <end position="622"/>
    </location>
</feature>
<feature type="repeat" description="WD 1">
    <location>
        <begin position="192"/>
        <end position="233"/>
    </location>
</feature>
<feature type="repeat" description="WD 2">
    <location>
        <begin position="234"/>
        <end position="271"/>
    </location>
</feature>
<feature type="repeat" description="WD 3">
    <location>
        <begin position="314"/>
        <end position="353"/>
    </location>
</feature>
<feature type="repeat" description="WD 4">
    <location>
        <begin position="356"/>
        <end position="395"/>
    </location>
</feature>
<feature type="repeat" description="WD 5">
    <location>
        <begin position="398"/>
        <end position="435"/>
    </location>
</feature>
<feature type="region of interest" description="Disordered" evidence="2">
    <location>
        <begin position="1"/>
        <end position="135"/>
    </location>
</feature>
<feature type="region of interest" description="Disordered" evidence="2">
    <location>
        <begin position="547"/>
        <end position="622"/>
    </location>
</feature>
<feature type="compositionally biased region" description="Basic and acidic residues" evidence="2">
    <location>
        <begin position="106"/>
        <end position="118"/>
    </location>
</feature>
<feature type="compositionally biased region" description="Basic and acidic residues" evidence="2">
    <location>
        <begin position="571"/>
        <end position="582"/>
    </location>
</feature>
<feature type="modified residue" description="Phosphoserine" evidence="1">
    <location>
        <position position="41"/>
    </location>
</feature>
<name>WDR46_MOUSE</name>
<keyword id="KW-0539">Nucleus</keyword>
<keyword id="KW-0597">Phosphoprotein</keyword>
<keyword id="KW-1185">Reference proteome</keyword>
<keyword id="KW-0677">Repeat</keyword>
<keyword id="KW-0853">WD repeat</keyword>
<organism>
    <name type="scientific">Mus musculus</name>
    <name type="common">Mouse</name>
    <dbReference type="NCBI Taxonomy" id="10090"/>
    <lineage>
        <taxon>Eukaryota</taxon>
        <taxon>Metazoa</taxon>
        <taxon>Chordata</taxon>
        <taxon>Craniata</taxon>
        <taxon>Vertebrata</taxon>
        <taxon>Euteleostomi</taxon>
        <taxon>Mammalia</taxon>
        <taxon>Eutheria</taxon>
        <taxon>Euarchontoglires</taxon>
        <taxon>Glires</taxon>
        <taxon>Rodentia</taxon>
        <taxon>Myomorpha</taxon>
        <taxon>Muroidea</taxon>
        <taxon>Muridae</taxon>
        <taxon>Murinae</taxon>
        <taxon>Mus</taxon>
        <taxon>Mus</taxon>
    </lineage>
</organism>
<dbReference type="EMBL" id="AF110520">
    <property type="protein sequence ID" value="AAC97976.1"/>
    <property type="molecule type" value="Genomic_DNA"/>
</dbReference>
<dbReference type="EMBL" id="AF100956">
    <property type="protein sequence ID" value="AAC69896.1"/>
    <property type="molecule type" value="Genomic_DNA"/>
</dbReference>
<dbReference type="EMBL" id="BC046977">
    <property type="protein sequence ID" value="AAH46977.1"/>
    <property type="molecule type" value="mRNA"/>
</dbReference>
<dbReference type="CCDS" id="CCDS28637.1"/>
<dbReference type="RefSeq" id="NP_065628.1">
    <property type="nucleotide sequence ID" value="NM_020603.2"/>
</dbReference>
<dbReference type="SMR" id="Q9Z0H1"/>
<dbReference type="BioGRID" id="208253">
    <property type="interactions" value="3"/>
</dbReference>
<dbReference type="FunCoup" id="Q9Z0H1">
    <property type="interactions" value="2492"/>
</dbReference>
<dbReference type="IntAct" id="Q9Z0H1">
    <property type="interactions" value="1"/>
</dbReference>
<dbReference type="MINT" id="Q9Z0H1"/>
<dbReference type="STRING" id="10090.ENSMUSP00000025170"/>
<dbReference type="GlyGen" id="Q9Z0H1">
    <property type="glycosylation" value="1 site, 1 O-linked glycan (1 site)"/>
</dbReference>
<dbReference type="iPTMnet" id="Q9Z0H1"/>
<dbReference type="PhosphoSitePlus" id="Q9Z0H1"/>
<dbReference type="SwissPalm" id="Q9Z0H1"/>
<dbReference type="jPOST" id="Q9Z0H1"/>
<dbReference type="PaxDb" id="10090-ENSMUSP00000025170"/>
<dbReference type="PeptideAtlas" id="Q9Z0H1"/>
<dbReference type="ProteomicsDB" id="299971"/>
<dbReference type="Pumba" id="Q9Z0H1"/>
<dbReference type="Antibodypedia" id="29045">
    <property type="antibodies" value="60 antibodies from 20 providers"/>
</dbReference>
<dbReference type="Ensembl" id="ENSMUST00000025170.11">
    <property type="protein sequence ID" value="ENSMUSP00000025170.10"/>
    <property type="gene ID" value="ENSMUSG00000024312.11"/>
</dbReference>
<dbReference type="GeneID" id="57315"/>
<dbReference type="KEGG" id="mmu:57315"/>
<dbReference type="UCSC" id="uc008cai.1">
    <property type="organism name" value="mouse"/>
</dbReference>
<dbReference type="AGR" id="MGI:1931871"/>
<dbReference type="CTD" id="9277"/>
<dbReference type="MGI" id="MGI:1931871">
    <property type="gene designation" value="Wdr46"/>
</dbReference>
<dbReference type="VEuPathDB" id="HostDB:ENSMUSG00000024312"/>
<dbReference type="eggNOG" id="KOG1272">
    <property type="taxonomic scope" value="Eukaryota"/>
</dbReference>
<dbReference type="GeneTree" id="ENSGT00390000007075"/>
<dbReference type="HOGENOM" id="CLU_022996_2_0_1"/>
<dbReference type="InParanoid" id="Q9Z0H1"/>
<dbReference type="OMA" id="EFLPYHW"/>
<dbReference type="OrthoDB" id="10251154at2759"/>
<dbReference type="PhylomeDB" id="Q9Z0H1"/>
<dbReference type="TreeFam" id="TF300861"/>
<dbReference type="Reactome" id="R-MMU-6791226">
    <property type="pathway name" value="Major pathway of rRNA processing in the nucleolus and cytosol"/>
</dbReference>
<dbReference type="BioGRID-ORCS" id="57315">
    <property type="hits" value="26 hits in 82 CRISPR screens"/>
</dbReference>
<dbReference type="ChiTaRS" id="Wdr46">
    <property type="organism name" value="mouse"/>
</dbReference>
<dbReference type="PRO" id="PR:Q9Z0H1"/>
<dbReference type="Proteomes" id="UP000000589">
    <property type="component" value="Chromosome 17"/>
</dbReference>
<dbReference type="RNAct" id="Q9Z0H1">
    <property type="molecule type" value="protein"/>
</dbReference>
<dbReference type="Bgee" id="ENSMUSG00000024312">
    <property type="expression patterns" value="Expressed in gonadal ridge and 245 other cell types or tissues"/>
</dbReference>
<dbReference type="ExpressionAtlas" id="Q9Z0H1">
    <property type="expression patterns" value="baseline and differential"/>
</dbReference>
<dbReference type="GO" id="GO:0005730">
    <property type="term" value="C:nucleolus"/>
    <property type="evidence" value="ECO:0007669"/>
    <property type="project" value="UniProtKB-SubCell"/>
</dbReference>
<dbReference type="GO" id="GO:0032040">
    <property type="term" value="C:small-subunit processome"/>
    <property type="evidence" value="ECO:0000250"/>
    <property type="project" value="UniProtKB"/>
</dbReference>
<dbReference type="GO" id="GO:0042274">
    <property type="term" value="P:ribosomal small subunit biogenesis"/>
    <property type="evidence" value="ECO:0000250"/>
    <property type="project" value="UniProtKB"/>
</dbReference>
<dbReference type="FunFam" id="2.130.10.10:FF:000128">
    <property type="entry name" value="WD repeat domain 46"/>
    <property type="match status" value="1"/>
</dbReference>
<dbReference type="Gene3D" id="2.130.10.10">
    <property type="entry name" value="YVTN repeat-like/Quinoprotein amine dehydrogenase"/>
    <property type="match status" value="1"/>
</dbReference>
<dbReference type="InterPro" id="IPR012952">
    <property type="entry name" value="BING4_C_dom"/>
</dbReference>
<dbReference type="InterPro" id="IPR015943">
    <property type="entry name" value="WD40/YVTN_repeat-like_dom_sf"/>
</dbReference>
<dbReference type="InterPro" id="IPR036322">
    <property type="entry name" value="WD40_repeat_dom_sf"/>
</dbReference>
<dbReference type="InterPro" id="IPR001680">
    <property type="entry name" value="WD40_rpt"/>
</dbReference>
<dbReference type="InterPro" id="IPR040315">
    <property type="entry name" value="WDR46/Utp7"/>
</dbReference>
<dbReference type="PANTHER" id="PTHR14085:SF3">
    <property type="entry name" value="WD REPEAT-CONTAINING PROTEIN 46"/>
    <property type="match status" value="1"/>
</dbReference>
<dbReference type="PANTHER" id="PTHR14085">
    <property type="entry name" value="WD-REPEAT PROTEIN BING4"/>
    <property type="match status" value="1"/>
</dbReference>
<dbReference type="Pfam" id="PF08149">
    <property type="entry name" value="BING4CT"/>
    <property type="match status" value="1"/>
</dbReference>
<dbReference type="Pfam" id="PF00400">
    <property type="entry name" value="WD40"/>
    <property type="match status" value="1"/>
</dbReference>
<dbReference type="SMART" id="SM01033">
    <property type="entry name" value="BING4CT"/>
    <property type="match status" value="1"/>
</dbReference>
<dbReference type="SMART" id="SM00320">
    <property type="entry name" value="WD40"/>
    <property type="match status" value="3"/>
</dbReference>
<dbReference type="SUPFAM" id="SSF50978">
    <property type="entry name" value="WD40 repeat-like"/>
    <property type="match status" value="1"/>
</dbReference>
<dbReference type="PROSITE" id="PS50082">
    <property type="entry name" value="WD_REPEATS_2"/>
    <property type="match status" value="1"/>
</dbReference>
<dbReference type="PROSITE" id="PS50294">
    <property type="entry name" value="WD_REPEATS_REGION"/>
    <property type="match status" value="1"/>
</dbReference>
<proteinExistence type="evidence at transcript level"/>
<accession>Q9Z0H1</accession>
<gene>
    <name type="primary">Wdr46</name>
    <name type="synonym">Bing4</name>
</gene>